<gene>
    <name evidence="1" type="primary">rpl5</name>
    <name type="ordered locus">APE_0354.1</name>
</gene>
<sequence>MSAKAQSLPIPPERVSEILDEWKRSPMRRPRIVKVTVNISIGQSGERLQRAAEVLEELTGQKPVFRKAKRTIRAFGVRKGENIAVMVTLRGEKALNFLKRALDAVGHRIKTSSIDEHGNVSFGIEEHILIPGVKYDPRVGILGMDVAITIQRPGHRIVERRRQRRGHIPRRHRVTREETMVLLNQLFGVTFV</sequence>
<evidence type="ECO:0000255" key="1">
    <source>
        <dbReference type="HAMAP-Rule" id="MF_01333"/>
    </source>
</evidence>
<evidence type="ECO:0000305" key="2"/>
<reference key="1">
    <citation type="journal article" date="1999" name="DNA Res.">
        <title>Complete genome sequence of an aerobic hyper-thermophilic crenarchaeon, Aeropyrum pernix K1.</title>
        <authorList>
            <person name="Kawarabayasi Y."/>
            <person name="Hino Y."/>
            <person name="Horikawa H."/>
            <person name="Yamazaki S."/>
            <person name="Haikawa Y."/>
            <person name="Jin-no K."/>
            <person name="Takahashi M."/>
            <person name="Sekine M."/>
            <person name="Baba S."/>
            <person name="Ankai A."/>
            <person name="Kosugi H."/>
            <person name="Hosoyama A."/>
            <person name="Fukui S."/>
            <person name="Nagai Y."/>
            <person name="Nishijima K."/>
            <person name="Nakazawa H."/>
            <person name="Takamiya M."/>
            <person name="Masuda S."/>
            <person name="Funahashi T."/>
            <person name="Tanaka T."/>
            <person name="Kudoh Y."/>
            <person name="Yamazaki J."/>
            <person name="Kushida N."/>
            <person name="Oguchi A."/>
            <person name="Aoki K."/>
            <person name="Kubota K."/>
            <person name="Nakamura Y."/>
            <person name="Nomura N."/>
            <person name="Sako Y."/>
            <person name="Kikuchi H."/>
        </authorList>
    </citation>
    <scope>NUCLEOTIDE SEQUENCE [LARGE SCALE GENOMIC DNA]</scope>
    <source>
        <strain>ATCC 700893 / DSM 11879 / JCM 9820 / NBRC 100138 / K1</strain>
    </source>
</reference>
<proteinExistence type="inferred from homology"/>
<protein>
    <recommendedName>
        <fullName evidence="1">Large ribosomal subunit protein uL5</fullName>
    </recommendedName>
    <alternativeName>
        <fullName evidence="2">50S ribosomal protein L5</fullName>
    </alternativeName>
</protein>
<name>RL5_AERPE</name>
<organism>
    <name type="scientific">Aeropyrum pernix (strain ATCC 700893 / DSM 11879 / JCM 9820 / NBRC 100138 / K1)</name>
    <dbReference type="NCBI Taxonomy" id="272557"/>
    <lineage>
        <taxon>Archaea</taxon>
        <taxon>Thermoproteota</taxon>
        <taxon>Thermoprotei</taxon>
        <taxon>Desulfurococcales</taxon>
        <taxon>Desulfurococcaceae</taxon>
        <taxon>Aeropyrum</taxon>
    </lineage>
</organism>
<feature type="chain" id="PRO_0000125049" description="Large ribosomal subunit protein uL5">
    <location>
        <begin position="1"/>
        <end position="192"/>
    </location>
</feature>
<keyword id="KW-1185">Reference proteome</keyword>
<keyword id="KW-0687">Ribonucleoprotein</keyword>
<keyword id="KW-0689">Ribosomal protein</keyword>
<keyword id="KW-0694">RNA-binding</keyword>
<keyword id="KW-0699">rRNA-binding</keyword>
<keyword id="KW-0820">tRNA-binding</keyword>
<dbReference type="EMBL" id="BA000002">
    <property type="protein sequence ID" value="BAA79309.2"/>
    <property type="molecule type" value="Genomic_DNA"/>
</dbReference>
<dbReference type="PIR" id="A72727">
    <property type="entry name" value="A72727"/>
</dbReference>
<dbReference type="RefSeq" id="WP_010865687.1">
    <property type="nucleotide sequence ID" value="NC_000854.2"/>
</dbReference>
<dbReference type="SMR" id="Q9YF87"/>
<dbReference type="STRING" id="272557.APE_0354.1"/>
<dbReference type="EnsemblBacteria" id="BAA79309">
    <property type="protein sequence ID" value="BAA79309"/>
    <property type="gene ID" value="APE_0354.1"/>
</dbReference>
<dbReference type="GeneID" id="1444570"/>
<dbReference type="KEGG" id="ape:APE_0354.1"/>
<dbReference type="PATRIC" id="fig|272557.25.peg.273"/>
<dbReference type="eggNOG" id="arCOG04092">
    <property type="taxonomic scope" value="Archaea"/>
</dbReference>
<dbReference type="Proteomes" id="UP000002518">
    <property type="component" value="Chromosome"/>
</dbReference>
<dbReference type="GO" id="GO:1990904">
    <property type="term" value="C:ribonucleoprotein complex"/>
    <property type="evidence" value="ECO:0007669"/>
    <property type="project" value="UniProtKB-KW"/>
</dbReference>
<dbReference type="GO" id="GO:0005840">
    <property type="term" value="C:ribosome"/>
    <property type="evidence" value="ECO:0007669"/>
    <property type="project" value="UniProtKB-KW"/>
</dbReference>
<dbReference type="GO" id="GO:0019843">
    <property type="term" value="F:rRNA binding"/>
    <property type="evidence" value="ECO:0007669"/>
    <property type="project" value="UniProtKB-UniRule"/>
</dbReference>
<dbReference type="GO" id="GO:0003735">
    <property type="term" value="F:structural constituent of ribosome"/>
    <property type="evidence" value="ECO:0007669"/>
    <property type="project" value="InterPro"/>
</dbReference>
<dbReference type="GO" id="GO:0000049">
    <property type="term" value="F:tRNA binding"/>
    <property type="evidence" value="ECO:0007669"/>
    <property type="project" value="UniProtKB-UniRule"/>
</dbReference>
<dbReference type="GO" id="GO:0006412">
    <property type="term" value="P:translation"/>
    <property type="evidence" value="ECO:0007669"/>
    <property type="project" value="UniProtKB-UniRule"/>
</dbReference>
<dbReference type="FunFam" id="3.30.1440.10:FF:000002">
    <property type="entry name" value="60S ribosomal protein L11"/>
    <property type="match status" value="1"/>
</dbReference>
<dbReference type="Gene3D" id="3.30.1440.10">
    <property type="match status" value="1"/>
</dbReference>
<dbReference type="HAMAP" id="MF_01333_A">
    <property type="entry name" value="Ribosomal_uL5_A"/>
    <property type="match status" value="1"/>
</dbReference>
<dbReference type="InterPro" id="IPR002132">
    <property type="entry name" value="Ribosomal_uL5"/>
</dbReference>
<dbReference type="InterPro" id="IPR022804">
    <property type="entry name" value="Ribosomal_uL5_arc"/>
</dbReference>
<dbReference type="InterPro" id="IPR031309">
    <property type="entry name" value="Ribosomal_uL5_C"/>
</dbReference>
<dbReference type="InterPro" id="IPR022803">
    <property type="entry name" value="Ribosomal_uL5_dom_sf"/>
</dbReference>
<dbReference type="InterPro" id="IPR031310">
    <property type="entry name" value="Ribosomal_uL5_N"/>
</dbReference>
<dbReference type="NCBIfam" id="NF003258">
    <property type="entry name" value="PRK04219.1"/>
    <property type="match status" value="1"/>
</dbReference>
<dbReference type="PANTHER" id="PTHR11994">
    <property type="entry name" value="60S RIBOSOMAL PROTEIN L11-RELATED"/>
    <property type="match status" value="1"/>
</dbReference>
<dbReference type="Pfam" id="PF00281">
    <property type="entry name" value="Ribosomal_L5"/>
    <property type="match status" value="1"/>
</dbReference>
<dbReference type="Pfam" id="PF00673">
    <property type="entry name" value="Ribosomal_L5_C"/>
    <property type="match status" value="1"/>
</dbReference>
<dbReference type="PIRSF" id="PIRSF002161">
    <property type="entry name" value="Ribosomal_L5"/>
    <property type="match status" value="1"/>
</dbReference>
<dbReference type="SUPFAM" id="SSF55282">
    <property type="entry name" value="RL5-like"/>
    <property type="match status" value="1"/>
</dbReference>
<comment type="function">
    <text evidence="1">This is one of the proteins that bind and probably mediate the attachment of the 5S RNA into the large ribosomal subunit, where it forms part of the central protuberance. In the 70S ribosome it contacts protein S13 of the 30S subunit (bridge B1b), connecting the 2 subunits; this bridge is implicated in subunit movement. May contact the P site tRNA; the 5S rRNA and some of its associated proteins might help stabilize positioning of ribosome-bound tRNAs.</text>
</comment>
<comment type="subunit">
    <text evidence="1">Part of the 50S ribosomal subunit; contacts the 5S rRNA and probably tRNA. Forms a bridge to the 30S subunit in the 70S ribosome.</text>
</comment>
<comment type="similarity">
    <text evidence="1">Belongs to the universal ribosomal protein uL5 family.</text>
</comment>
<accession>Q9YF87</accession>